<accession>Q55DL2</accession>
<keyword id="KW-0963">Cytoplasm</keyword>
<keyword id="KW-0489">Methyltransferase</keyword>
<keyword id="KW-0539">Nucleus</keyword>
<keyword id="KW-1185">Reference proteome</keyword>
<keyword id="KW-0949">S-adenosyl-L-methionine</keyword>
<keyword id="KW-0808">Transferase</keyword>
<organism>
    <name type="scientific">Dictyostelium discoideum</name>
    <name type="common">Social amoeba</name>
    <dbReference type="NCBI Taxonomy" id="44689"/>
    <lineage>
        <taxon>Eukaryota</taxon>
        <taxon>Amoebozoa</taxon>
        <taxon>Evosea</taxon>
        <taxon>Eumycetozoa</taxon>
        <taxon>Dictyostelia</taxon>
        <taxon>Dictyosteliales</taxon>
        <taxon>Dictyosteliaceae</taxon>
        <taxon>Dictyostelium</taxon>
    </lineage>
</organism>
<gene>
    <name type="ORF">DDB_G0270580</name>
</gene>
<sequence>MSFKFNFQVDEDENDNGNNNEQNNEESKLDISEFDSSSKMDELPSKYIDLRNNLSSLLSNVETEIVTFSSNNKLKKLVKPFKGNQDNNNDNNVNSNDKNDNNNNNNNNNKDYEKLLDKTDLIPGVYEGGFKLWECSIDIINYLFEEKIDLSGKKVLEIGCGHGLPGIYCLLNGSIVTFQDYNEEVIYNLTQPNVLINGGDINRAKYISGDWKFVDQLLKNEKFDIILTSDTLYNVGSFKKLYNLISNHLESNGKCYLASKTYYFGVGGGIRKFEELLKILNRLSIKTVRDIKDGLSNVREVVEITNKIN</sequence>
<dbReference type="EC" id="2.1.1.85" evidence="1"/>
<dbReference type="EMBL" id="AAFI02000005">
    <property type="protein sequence ID" value="EAL72640.1"/>
    <property type="molecule type" value="Genomic_DNA"/>
</dbReference>
<dbReference type="RefSeq" id="XP_646119.1">
    <property type="nucleotide sequence ID" value="XM_641027.1"/>
</dbReference>
<dbReference type="SMR" id="Q55DL2"/>
<dbReference type="FunCoup" id="Q55DL2">
    <property type="interactions" value="429"/>
</dbReference>
<dbReference type="STRING" id="44689.Q55DL2"/>
<dbReference type="PaxDb" id="44689-DDB0304996"/>
<dbReference type="EnsemblProtists" id="EAL72640">
    <property type="protein sequence ID" value="EAL72640"/>
    <property type="gene ID" value="DDB_G0270580"/>
</dbReference>
<dbReference type="GeneID" id="8617068"/>
<dbReference type="KEGG" id="ddi:DDB_G0270580"/>
<dbReference type="dictyBase" id="DDB_G0270580"/>
<dbReference type="VEuPathDB" id="AmoebaDB:DDB_G0270580"/>
<dbReference type="eggNOG" id="KOG2920">
    <property type="taxonomic scope" value="Eukaryota"/>
</dbReference>
<dbReference type="HOGENOM" id="CLU_038704_0_0_1"/>
<dbReference type="InParanoid" id="Q55DL2"/>
<dbReference type="OMA" id="NNETEQM"/>
<dbReference type="PhylomeDB" id="Q55DL2"/>
<dbReference type="PRO" id="PR:Q55DL2"/>
<dbReference type="Proteomes" id="UP000002195">
    <property type="component" value="Chromosome 1"/>
</dbReference>
<dbReference type="GO" id="GO:0005829">
    <property type="term" value="C:cytosol"/>
    <property type="evidence" value="ECO:0000250"/>
    <property type="project" value="UniProtKB"/>
</dbReference>
<dbReference type="GO" id="GO:0005730">
    <property type="term" value="C:nucleolus"/>
    <property type="evidence" value="ECO:0000250"/>
    <property type="project" value="UniProtKB"/>
</dbReference>
<dbReference type="GO" id="GO:0005634">
    <property type="term" value="C:nucleus"/>
    <property type="evidence" value="ECO:0000318"/>
    <property type="project" value="GO_Central"/>
</dbReference>
<dbReference type="GO" id="GO:0018064">
    <property type="term" value="F:protein-L-histidine N-tele-methyltransferase activity"/>
    <property type="evidence" value="ECO:0000250"/>
    <property type="project" value="UniProtKB"/>
</dbReference>
<dbReference type="GO" id="GO:0018026">
    <property type="term" value="P:peptidyl-lysine monomethylation"/>
    <property type="evidence" value="ECO:0000250"/>
    <property type="project" value="UniProtKB"/>
</dbReference>
<dbReference type="GO" id="GO:0006417">
    <property type="term" value="P:regulation of translation"/>
    <property type="evidence" value="ECO:0000318"/>
    <property type="project" value="GO_Central"/>
</dbReference>
<dbReference type="CDD" id="cd02440">
    <property type="entry name" value="AdoMet_MTases"/>
    <property type="match status" value="1"/>
</dbReference>
<dbReference type="Gene3D" id="3.40.50.150">
    <property type="entry name" value="Vaccinia Virus protein VP39"/>
    <property type="match status" value="1"/>
</dbReference>
<dbReference type="InterPro" id="IPR019410">
    <property type="entry name" value="Methyltransf_16"/>
</dbReference>
<dbReference type="InterPro" id="IPR029063">
    <property type="entry name" value="SAM-dependent_MTases_sf"/>
</dbReference>
<dbReference type="PANTHER" id="PTHR14614">
    <property type="entry name" value="HEPATOCELLULAR CARCINOMA-ASSOCIATED ANTIGEN"/>
    <property type="match status" value="1"/>
</dbReference>
<dbReference type="PANTHER" id="PTHR14614:SF39">
    <property type="entry name" value="HISTIDINE PROTEIN METHYLTRANSFERASE 1 HOMOLOG"/>
    <property type="match status" value="1"/>
</dbReference>
<dbReference type="Pfam" id="PF10294">
    <property type="entry name" value="Methyltransf_16"/>
    <property type="match status" value="1"/>
</dbReference>
<dbReference type="SUPFAM" id="SSF53335">
    <property type="entry name" value="S-adenosyl-L-methionine-dependent methyltransferases"/>
    <property type="match status" value="1"/>
</dbReference>
<proteinExistence type="inferred from homology"/>
<reference key="1">
    <citation type="journal article" date="2005" name="Nature">
        <title>The genome of the social amoeba Dictyostelium discoideum.</title>
        <authorList>
            <person name="Eichinger L."/>
            <person name="Pachebat J.A."/>
            <person name="Gloeckner G."/>
            <person name="Rajandream M.A."/>
            <person name="Sucgang R."/>
            <person name="Berriman M."/>
            <person name="Song J."/>
            <person name="Olsen R."/>
            <person name="Szafranski K."/>
            <person name="Xu Q."/>
            <person name="Tunggal B."/>
            <person name="Kummerfeld S."/>
            <person name="Madera M."/>
            <person name="Konfortov B.A."/>
            <person name="Rivero F."/>
            <person name="Bankier A.T."/>
            <person name="Lehmann R."/>
            <person name="Hamlin N."/>
            <person name="Davies R."/>
            <person name="Gaudet P."/>
            <person name="Fey P."/>
            <person name="Pilcher K."/>
            <person name="Chen G."/>
            <person name="Saunders D."/>
            <person name="Sodergren E.J."/>
            <person name="Davis P."/>
            <person name="Kerhornou A."/>
            <person name="Nie X."/>
            <person name="Hall N."/>
            <person name="Anjard C."/>
            <person name="Hemphill L."/>
            <person name="Bason N."/>
            <person name="Farbrother P."/>
            <person name="Desany B."/>
            <person name="Just E."/>
            <person name="Morio T."/>
            <person name="Rost R."/>
            <person name="Churcher C.M."/>
            <person name="Cooper J."/>
            <person name="Haydock S."/>
            <person name="van Driessche N."/>
            <person name="Cronin A."/>
            <person name="Goodhead I."/>
            <person name="Muzny D.M."/>
            <person name="Mourier T."/>
            <person name="Pain A."/>
            <person name="Lu M."/>
            <person name="Harper D."/>
            <person name="Lindsay R."/>
            <person name="Hauser H."/>
            <person name="James K.D."/>
            <person name="Quiles M."/>
            <person name="Madan Babu M."/>
            <person name="Saito T."/>
            <person name="Buchrieser C."/>
            <person name="Wardroper A."/>
            <person name="Felder M."/>
            <person name="Thangavelu M."/>
            <person name="Johnson D."/>
            <person name="Knights A."/>
            <person name="Loulseged H."/>
            <person name="Mungall K.L."/>
            <person name="Oliver K."/>
            <person name="Price C."/>
            <person name="Quail M.A."/>
            <person name="Urushihara H."/>
            <person name="Hernandez J."/>
            <person name="Rabbinowitsch E."/>
            <person name="Steffen D."/>
            <person name="Sanders M."/>
            <person name="Ma J."/>
            <person name="Kohara Y."/>
            <person name="Sharp S."/>
            <person name="Simmonds M.N."/>
            <person name="Spiegler S."/>
            <person name="Tivey A."/>
            <person name="Sugano S."/>
            <person name="White B."/>
            <person name="Walker D."/>
            <person name="Woodward J.R."/>
            <person name="Winckler T."/>
            <person name="Tanaka Y."/>
            <person name="Shaulsky G."/>
            <person name="Schleicher M."/>
            <person name="Weinstock G.M."/>
            <person name="Rosenthal A."/>
            <person name="Cox E.C."/>
            <person name="Chisholm R.L."/>
            <person name="Gibbs R.A."/>
            <person name="Loomis W.F."/>
            <person name="Platzer M."/>
            <person name="Kay R.R."/>
            <person name="Williams J.G."/>
            <person name="Dear P.H."/>
            <person name="Noegel A.A."/>
            <person name="Barrell B.G."/>
            <person name="Kuspa A."/>
        </authorList>
    </citation>
    <scope>NUCLEOTIDE SEQUENCE [LARGE SCALE GENOMIC DNA]</scope>
    <source>
        <strain>AX4</strain>
    </source>
</reference>
<feature type="chain" id="PRO_0000328433" description="Histidine protein methyltransferase 1 homolog">
    <location>
        <begin position="1"/>
        <end position="309"/>
    </location>
</feature>
<feature type="region of interest" description="Disordered" evidence="2">
    <location>
        <begin position="1"/>
        <end position="37"/>
    </location>
</feature>
<feature type="region of interest" description="Disordered" evidence="2">
    <location>
        <begin position="79"/>
        <end position="111"/>
    </location>
</feature>
<feature type="compositionally biased region" description="Basic and acidic residues" evidence="2">
    <location>
        <begin position="25"/>
        <end position="37"/>
    </location>
</feature>
<feature type="compositionally biased region" description="Low complexity" evidence="2">
    <location>
        <begin position="84"/>
        <end position="109"/>
    </location>
</feature>
<feature type="binding site" evidence="1">
    <location>
        <begin position="132"/>
        <end position="136"/>
    </location>
    <ligand>
        <name>S-adenosyl-L-methionine</name>
        <dbReference type="ChEBI" id="CHEBI:59789"/>
    </ligand>
</feature>
<feature type="binding site" evidence="1">
    <location>
        <position position="159"/>
    </location>
    <ligand>
        <name>S-adenosyl-L-methionine</name>
        <dbReference type="ChEBI" id="CHEBI:59789"/>
    </ligand>
</feature>
<feature type="binding site" evidence="1">
    <location>
        <begin position="179"/>
        <end position="181"/>
    </location>
    <ligand>
        <name>S-adenosyl-L-methionine</name>
        <dbReference type="ChEBI" id="CHEBI:59789"/>
    </ligand>
</feature>
<feature type="binding site" evidence="1">
    <location>
        <begin position="209"/>
        <end position="211"/>
    </location>
    <ligand>
        <name>S-adenosyl-L-methionine</name>
        <dbReference type="ChEBI" id="CHEBI:59789"/>
    </ligand>
</feature>
<feature type="binding site" evidence="1">
    <location>
        <position position="229"/>
    </location>
    <ligand>
        <name>S-adenosyl-L-methionine</name>
        <dbReference type="ChEBI" id="CHEBI:59789"/>
    </ligand>
</feature>
<protein>
    <recommendedName>
        <fullName evidence="3">Histidine protein methyltransferase 1 homolog</fullName>
        <ecNumber evidence="1">2.1.1.85</ecNumber>
    </recommendedName>
    <alternativeName>
        <fullName evidence="1">Protein METTL18 homolog</fullName>
    </alternativeName>
</protein>
<comment type="function">
    <text evidence="1">Protein-L-histidine N-tele-methyltransferase that probably monomethylates RPL3. Through the methylation of RPL3 may regulate the dynamics of pre-rRNA processing, ribosome biogenesis, and translation.</text>
</comment>
<comment type="catalytic activity">
    <reaction evidence="1">
        <text>L-histidyl-[protein] + S-adenosyl-L-methionine = N(tele)-methyl-L-histidyl-[protein] + S-adenosyl-L-homocysteine + H(+)</text>
        <dbReference type="Rhea" id="RHEA:19369"/>
        <dbReference type="Rhea" id="RHEA-COMP:9745"/>
        <dbReference type="Rhea" id="RHEA-COMP:11600"/>
        <dbReference type="ChEBI" id="CHEBI:15378"/>
        <dbReference type="ChEBI" id="CHEBI:16367"/>
        <dbReference type="ChEBI" id="CHEBI:29979"/>
        <dbReference type="ChEBI" id="CHEBI:57856"/>
        <dbReference type="ChEBI" id="CHEBI:59789"/>
        <dbReference type="EC" id="2.1.1.85"/>
    </reaction>
    <physiologicalReaction direction="left-to-right" evidence="1">
        <dbReference type="Rhea" id="RHEA:19370"/>
    </physiologicalReaction>
</comment>
<comment type="subcellular location">
    <subcellularLocation>
        <location evidence="1">Cytoplasm</location>
        <location evidence="1">Cytosol</location>
    </subcellularLocation>
    <subcellularLocation>
        <location evidence="1">Nucleus</location>
    </subcellularLocation>
    <subcellularLocation>
        <location evidence="1">Nucleus</location>
        <location evidence="1">Nucleolus</location>
    </subcellularLocation>
</comment>
<comment type="similarity">
    <text evidence="3">Belongs to the methyltransferase superfamily. METTL18 family.</text>
</comment>
<name>MET18_DICDI</name>
<evidence type="ECO:0000250" key="1">
    <source>
        <dbReference type="UniProtKB" id="O95568"/>
    </source>
</evidence>
<evidence type="ECO:0000256" key="2">
    <source>
        <dbReference type="SAM" id="MobiDB-lite"/>
    </source>
</evidence>
<evidence type="ECO:0000305" key="3"/>